<comment type="function">
    <text evidence="1">Involved in the aerobic and anaerobic degradation of long-chain fatty acids via beta-oxidation cycle. Catalyzes the formation of 3-oxoacyl-CoA from enoyl-CoA via L-3-hydroxyacyl-CoA. It can also use D-3-hydroxyacyl-CoA and cis-3-enoyl-CoA as substrate.</text>
</comment>
<comment type="catalytic activity">
    <reaction evidence="1">
        <text>a (3S)-3-hydroxyacyl-CoA + NAD(+) = a 3-oxoacyl-CoA + NADH + H(+)</text>
        <dbReference type="Rhea" id="RHEA:22432"/>
        <dbReference type="ChEBI" id="CHEBI:15378"/>
        <dbReference type="ChEBI" id="CHEBI:57318"/>
        <dbReference type="ChEBI" id="CHEBI:57540"/>
        <dbReference type="ChEBI" id="CHEBI:57945"/>
        <dbReference type="ChEBI" id="CHEBI:90726"/>
        <dbReference type="EC" id="1.1.1.35"/>
    </reaction>
</comment>
<comment type="catalytic activity">
    <reaction evidence="1">
        <text>a (3S)-3-hydroxyacyl-CoA = a (2E)-enoyl-CoA + H2O</text>
        <dbReference type="Rhea" id="RHEA:16105"/>
        <dbReference type="ChEBI" id="CHEBI:15377"/>
        <dbReference type="ChEBI" id="CHEBI:57318"/>
        <dbReference type="ChEBI" id="CHEBI:58856"/>
        <dbReference type="EC" id="4.2.1.17"/>
    </reaction>
</comment>
<comment type="catalytic activity">
    <reaction evidence="1">
        <text>a 4-saturated-(3S)-3-hydroxyacyl-CoA = a (3E)-enoyl-CoA + H2O</text>
        <dbReference type="Rhea" id="RHEA:20724"/>
        <dbReference type="ChEBI" id="CHEBI:15377"/>
        <dbReference type="ChEBI" id="CHEBI:58521"/>
        <dbReference type="ChEBI" id="CHEBI:137480"/>
        <dbReference type="EC" id="4.2.1.17"/>
    </reaction>
</comment>
<comment type="catalytic activity">
    <reaction evidence="1">
        <text>(3S)-3-hydroxybutanoyl-CoA = (3R)-3-hydroxybutanoyl-CoA</text>
        <dbReference type="Rhea" id="RHEA:21760"/>
        <dbReference type="ChEBI" id="CHEBI:57315"/>
        <dbReference type="ChEBI" id="CHEBI:57316"/>
        <dbReference type="EC" id="5.1.2.3"/>
    </reaction>
</comment>
<comment type="catalytic activity">
    <reaction evidence="1">
        <text>a (3Z)-enoyl-CoA = a 4-saturated (2E)-enoyl-CoA</text>
        <dbReference type="Rhea" id="RHEA:45900"/>
        <dbReference type="ChEBI" id="CHEBI:85097"/>
        <dbReference type="ChEBI" id="CHEBI:85489"/>
        <dbReference type="EC" id="5.3.3.8"/>
    </reaction>
</comment>
<comment type="catalytic activity">
    <reaction evidence="1">
        <text>a (3E)-enoyl-CoA = a 4-saturated (2E)-enoyl-CoA</text>
        <dbReference type="Rhea" id="RHEA:45228"/>
        <dbReference type="ChEBI" id="CHEBI:58521"/>
        <dbReference type="ChEBI" id="CHEBI:85097"/>
        <dbReference type="EC" id="5.3.3.8"/>
    </reaction>
</comment>
<comment type="pathway">
    <text evidence="1">Lipid metabolism; fatty acid beta-oxidation.</text>
</comment>
<comment type="subunit">
    <text evidence="1">Heterotetramer of two alpha chains (FadB) and two beta chains (FadA).</text>
</comment>
<comment type="similarity">
    <text evidence="1">In the N-terminal section; belongs to the enoyl-CoA hydratase/isomerase family.</text>
</comment>
<comment type="similarity">
    <text evidence="1">In the C-terminal section; belongs to the 3-hydroxyacyl-CoA dehydrogenase family.</text>
</comment>
<protein>
    <recommendedName>
        <fullName evidence="1">Fatty acid oxidation complex subunit alpha</fullName>
    </recommendedName>
    <domain>
        <recommendedName>
            <fullName evidence="1">Enoyl-CoA hydratase/Delta(3)-cis-Delta(2)-trans-enoyl-CoA isomerase/3-hydroxybutyryl-CoA epimerase</fullName>
            <ecNumber evidence="1">4.2.1.17</ecNumber>
            <ecNumber evidence="1">5.1.2.3</ecNumber>
            <ecNumber evidence="1">5.3.3.8</ecNumber>
        </recommendedName>
    </domain>
    <domain>
        <recommendedName>
            <fullName evidence="1">3-hydroxyacyl-CoA dehydrogenase</fullName>
            <ecNumber evidence="1">1.1.1.35</ecNumber>
        </recommendedName>
    </domain>
</protein>
<keyword id="KW-0276">Fatty acid metabolism</keyword>
<keyword id="KW-0413">Isomerase</keyword>
<keyword id="KW-0442">Lipid degradation</keyword>
<keyword id="KW-0443">Lipid metabolism</keyword>
<keyword id="KW-0456">Lyase</keyword>
<keyword id="KW-0511">Multifunctional enzyme</keyword>
<keyword id="KW-0520">NAD</keyword>
<keyword id="KW-0560">Oxidoreductase</keyword>
<proteinExistence type="inferred from homology"/>
<organism>
    <name type="scientific">Escherichia coli (strain SE11)</name>
    <dbReference type="NCBI Taxonomy" id="409438"/>
    <lineage>
        <taxon>Bacteria</taxon>
        <taxon>Pseudomonadati</taxon>
        <taxon>Pseudomonadota</taxon>
        <taxon>Gammaproteobacteria</taxon>
        <taxon>Enterobacterales</taxon>
        <taxon>Enterobacteriaceae</taxon>
        <taxon>Escherichia</taxon>
    </lineage>
</organism>
<gene>
    <name evidence="1" type="primary">fadB</name>
    <name type="ordered locus">ECSE_4132</name>
</gene>
<accession>B6I4I6</accession>
<dbReference type="EC" id="4.2.1.17" evidence="1"/>
<dbReference type="EC" id="5.1.2.3" evidence="1"/>
<dbReference type="EC" id="5.3.3.8" evidence="1"/>
<dbReference type="EC" id="1.1.1.35" evidence="1"/>
<dbReference type="EMBL" id="AP009240">
    <property type="protein sequence ID" value="BAG79656.1"/>
    <property type="molecule type" value="Genomic_DNA"/>
</dbReference>
<dbReference type="RefSeq" id="WP_000965893.1">
    <property type="nucleotide sequence ID" value="NC_011415.1"/>
</dbReference>
<dbReference type="SMR" id="B6I4I6"/>
<dbReference type="KEGG" id="ecy:ECSE_4132"/>
<dbReference type="HOGENOM" id="CLU_009834_16_3_6"/>
<dbReference type="UniPathway" id="UPA00659"/>
<dbReference type="Proteomes" id="UP000008199">
    <property type="component" value="Chromosome"/>
</dbReference>
<dbReference type="GO" id="GO:0036125">
    <property type="term" value="C:fatty acid beta-oxidation multienzyme complex"/>
    <property type="evidence" value="ECO:0007669"/>
    <property type="project" value="InterPro"/>
</dbReference>
<dbReference type="GO" id="GO:0008692">
    <property type="term" value="F:3-hydroxybutyryl-CoA epimerase activity"/>
    <property type="evidence" value="ECO:0007669"/>
    <property type="project" value="UniProtKB-UniRule"/>
</dbReference>
<dbReference type="GO" id="GO:0004165">
    <property type="term" value="F:delta(3)-delta(2)-enoyl-CoA isomerase activity"/>
    <property type="evidence" value="ECO:0007669"/>
    <property type="project" value="UniProtKB-UniRule"/>
</dbReference>
<dbReference type="GO" id="GO:0004300">
    <property type="term" value="F:enoyl-CoA hydratase activity"/>
    <property type="evidence" value="ECO:0007669"/>
    <property type="project" value="UniProtKB-UniRule"/>
</dbReference>
<dbReference type="GO" id="GO:0016509">
    <property type="term" value="F:long-chain-3-hydroxyacyl-CoA dehydrogenase activity"/>
    <property type="evidence" value="ECO:0007669"/>
    <property type="project" value="TreeGrafter"/>
</dbReference>
<dbReference type="GO" id="GO:0070403">
    <property type="term" value="F:NAD+ binding"/>
    <property type="evidence" value="ECO:0007669"/>
    <property type="project" value="InterPro"/>
</dbReference>
<dbReference type="GO" id="GO:0006635">
    <property type="term" value="P:fatty acid beta-oxidation"/>
    <property type="evidence" value="ECO:0007669"/>
    <property type="project" value="UniProtKB-UniRule"/>
</dbReference>
<dbReference type="CDD" id="cd06558">
    <property type="entry name" value="crotonase-like"/>
    <property type="match status" value="1"/>
</dbReference>
<dbReference type="FunFam" id="1.10.1040.50:FF:000001">
    <property type="entry name" value="Fatty acid oxidation complex subunit alpha"/>
    <property type="match status" value="1"/>
</dbReference>
<dbReference type="FunFam" id="3.90.226.10:FF:000018">
    <property type="entry name" value="Fatty acid oxidation complex subunit alpha"/>
    <property type="match status" value="1"/>
</dbReference>
<dbReference type="FunFam" id="3.40.50.720:FF:000009">
    <property type="entry name" value="Fatty oxidation complex, alpha subunit"/>
    <property type="match status" value="1"/>
</dbReference>
<dbReference type="Gene3D" id="1.10.1040.50">
    <property type="match status" value="1"/>
</dbReference>
<dbReference type="Gene3D" id="3.90.226.10">
    <property type="entry name" value="2-enoyl-CoA Hydratase, Chain A, domain 1"/>
    <property type="match status" value="1"/>
</dbReference>
<dbReference type="Gene3D" id="3.40.50.720">
    <property type="entry name" value="NAD(P)-binding Rossmann-like Domain"/>
    <property type="match status" value="1"/>
</dbReference>
<dbReference type="HAMAP" id="MF_01621">
    <property type="entry name" value="FadB"/>
    <property type="match status" value="1"/>
</dbReference>
<dbReference type="InterPro" id="IPR006180">
    <property type="entry name" value="3-OHacyl-CoA_DH_CS"/>
</dbReference>
<dbReference type="InterPro" id="IPR006176">
    <property type="entry name" value="3-OHacyl-CoA_DH_NAD-bd"/>
</dbReference>
<dbReference type="InterPro" id="IPR006108">
    <property type="entry name" value="3HC_DH_C"/>
</dbReference>
<dbReference type="InterPro" id="IPR008927">
    <property type="entry name" value="6-PGluconate_DH-like_C_sf"/>
</dbReference>
<dbReference type="InterPro" id="IPR029045">
    <property type="entry name" value="ClpP/crotonase-like_dom_sf"/>
</dbReference>
<dbReference type="InterPro" id="IPR001753">
    <property type="entry name" value="Enoyl-CoA_hydra/iso"/>
</dbReference>
<dbReference type="InterPro" id="IPR050136">
    <property type="entry name" value="FA_oxidation_alpha_subunit"/>
</dbReference>
<dbReference type="InterPro" id="IPR012799">
    <property type="entry name" value="FadB"/>
</dbReference>
<dbReference type="InterPro" id="IPR036291">
    <property type="entry name" value="NAD(P)-bd_dom_sf"/>
</dbReference>
<dbReference type="NCBIfam" id="TIGR02437">
    <property type="entry name" value="FadB"/>
    <property type="match status" value="1"/>
</dbReference>
<dbReference type="NCBIfam" id="NF008727">
    <property type="entry name" value="PRK11730.1"/>
    <property type="match status" value="1"/>
</dbReference>
<dbReference type="PANTHER" id="PTHR43612">
    <property type="entry name" value="TRIFUNCTIONAL ENZYME SUBUNIT ALPHA"/>
    <property type="match status" value="1"/>
</dbReference>
<dbReference type="PANTHER" id="PTHR43612:SF3">
    <property type="entry name" value="TRIFUNCTIONAL ENZYME SUBUNIT ALPHA, MITOCHONDRIAL"/>
    <property type="match status" value="1"/>
</dbReference>
<dbReference type="Pfam" id="PF00725">
    <property type="entry name" value="3HCDH"/>
    <property type="match status" value="2"/>
</dbReference>
<dbReference type="Pfam" id="PF02737">
    <property type="entry name" value="3HCDH_N"/>
    <property type="match status" value="1"/>
</dbReference>
<dbReference type="Pfam" id="PF00378">
    <property type="entry name" value="ECH_1"/>
    <property type="match status" value="1"/>
</dbReference>
<dbReference type="SUPFAM" id="SSF48179">
    <property type="entry name" value="6-phosphogluconate dehydrogenase C-terminal domain-like"/>
    <property type="match status" value="2"/>
</dbReference>
<dbReference type="SUPFAM" id="SSF52096">
    <property type="entry name" value="ClpP/crotonase"/>
    <property type="match status" value="1"/>
</dbReference>
<dbReference type="SUPFAM" id="SSF51735">
    <property type="entry name" value="NAD(P)-binding Rossmann-fold domains"/>
    <property type="match status" value="1"/>
</dbReference>
<dbReference type="PROSITE" id="PS00067">
    <property type="entry name" value="3HCDH"/>
    <property type="match status" value="1"/>
</dbReference>
<reference key="1">
    <citation type="journal article" date="2008" name="DNA Res.">
        <title>Complete genome sequence and comparative analysis of the wild-type commensal Escherichia coli strain SE11 isolated from a healthy adult.</title>
        <authorList>
            <person name="Oshima K."/>
            <person name="Toh H."/>
            <person name="Ogura Y."/>
            <person name="Sasamoto H."/>
            <person name="Morita H."/>
            <person name="Park S.-H."/>
            <person name="Ooka T."/>
            <person name="Iyoda S."/>
            <person name="Taylor T.D."/>
            <person name="Hayashi T."/>
            <person name="Itoh K."/>
            <person name="Hattori M."/>
        </authorList>
    </citation>
    <scope>NUCLEOTIDE SEQUENCE [LARGE SCALE GENOMIC DNA]</scope>
    <source>
        <strain>SE11</strain>
    </source>
</reference>
<sequence length="729" mass="79537">MLYKGDTLYLDWLEDGIAELVFDAPGSVNKLDTATVASLGEAIGVLEQQSDLKGLLLRSNKAAFIVGADITEFLSLFLVPEEQLSQWLHFANSVFNRLEDLPVPTIAAANGYALGGGCECVLATDYRLATPDLRIGLPETKLGIMPGFGGSVRMPRMLGADSALEIIAAGKDVGADQALKIGLVDGVVKAEKLVEGAKAVLRQAINGDLDWKAKRQPKLEPLKLSKIEATMSFTIAKGMVAQTAGKHYPAPITAVKTIEAAARFGREEALNLENKSFVPLAHTNEARALVGIFLNDQYVKGKAKKLTKDVETPKQAAVLGAGIMGGGIAYQSAWKGVPVVMKDINDKSLTLGMTEAAKLLNKQLERGKIDGLKLAGVISTIHPTLDYAGFDRVDVVVEAVVENPKVKKAVLAETEQKVRPDTVLASNTSTIPISELANALERPENFCGMHFFNPVHRMPLVEIIRGEKSSDETIAKVVAWASKMGKTPIVVNDCPGFFVNRVLFPYFAGFSQLLRDGADFRKIDKVMEKQFGWPMGPAYLLDVVGIDTAHHAQAVMAAGFPQRMQKDYRDAIDALFDANRFGQKNGLGFWRYKEDSKGKPKKEEDAAVEDLLAEVSQPKRDFSEEEIIARMMIPMVNEVVRCLEEGIIATPAEADMALVYGLGFPPFHGGAFRWLDTLGSAKYLDMAQQYQHLGPLYEVPEGLRNKARHNEPYYPPVEPARLVGDLKTA</sequence>
<feature type="chain" id="PRO_1000186041" description="Fatty acid oxidation complex subunit alpha">
    <location>
        <begin position="1"/>
        <end position="729"/>
    </location>
</feature>
<feature type="region of interest" description="Enoyl-CoA hydratase/isomerase" evidence="1">
    <location>
        <begin position="1"/>
        <end position="189"/>
    </location>
</feature>
<feature type="region of interest" description="3-hydroxyacyl-CoA dehydrogenase" evidence="1">
    <location>
        <begin position="311"/>
        <end position="729"/>
    </location>
</feature>
<feature type="active site" description="For 3-hydroxyacyl-CoA dehydrogenase activity" evidence="1">
    <location>
        <position position="450"/>
    </location>
</feature>
<feature type="binding site" evidence="1">
    <location>
        <position position="296"/>
    </location>
    <ligand>
        <name>substrate</name>
    </ligand>
</feature>
<feature type="binding site" evidence="1">
    <location>
        <position position="324"/>
    </location>
    <ligand>
        <name>NAD(+)</name>
        <dbReference type="ChEBI" id="CHEBI:57540"/>
    </ligand>
</feature>
<feature type="binding site" evidence="1">
    <location>
        <position position="343"/>
    </location>
    <ligand>
        <name>NAD(+)</name>
        <dbReference type="ChEBI" id="CHEBI:57540"/>
    </ligand>
</feature>
<feature type="binding site" evidence="1">
    <location>
        <begin position="400"/>
        <end position="402"/>
    </location>
    <ligand>
        <name>NAD(+)</name>
        <dbReference type="ChEBI" id="CHEBI:57540"/>
    </ligand>
</feature>
<feature type="binding site" evidence="1">
    <location>
        <position position="407"/>
    </location>
    <ligand>
        <name>NAD(+)</name>
        <dbReference type="ChEBI" id="CHEBI:57540"/>
    </ligand>
</feature>
<feature type="binding site" evidence="1">
    <location>
        <position position="429"/>
    </location>
    <ligand>
        <name>NAD(+)</name>
        <dbReference type="ChEBI" id="CHEBI:57540"/>
    </ligand>
</feature>
<feature type="binding site" evidence="1">
    <location>
        <position position="453"/>
    </location>
    <ligand>
        <name>NAD(+)</name>
        <dbReference type="ChEBI" id="CHEBI:57540"/>
    </ligand>
</feature>
<feature type="binding site" evidence="1">
    <location>
        <position position="500"/>
    </location>
    <ligand>
        <name>substrate</name>
    </ligand>
</feature>
<feature type="binding site" evidence="1">
    <location>
        <position position="660"/>
    </location>
    <ligand>
        <name>substrate</name>
    </ligand>
</feature>
<feature type="site" description="Important for catalytic activity" evidence="1">
    <location>
        <position position="119"/>
    </location>
</feature>
<feature type="site" description="Important for catalytic activity" evidence="1">
    <location>
        <position position="139"/>
    </location>
</feature>
<evidence type="ECO:0000255" key="1">
    <source>
        <dbReference type="HAMAP-Rule" id="MF_01621"/>
    </source>
</evidence>
<name>FADB_ECOSE</name>